<sequence>MSDNLSARWHRILDMTNRETSDDVVIARSSFDDFSQSTPWRKFEISCGNRSFFVNPGWLAELSPYFADELYVRKPNVQRYVIDQATPDEVLEFLRCITFCPMRKPLTVKNVSLVLTFANRFEMRPVQARCENFIAQNATSLSRDKTKLFQFFPLQVTCAMSQCDPNSSTMSVLVDKLAGIKDDELSRLHFAEMPGDVVAEVYAQKIQRTKDKKAQRQAGASDETAAGCCFMQWASSLFNRRRQRNQADQSILPPSGDQQHHRSELHA</sequence>
<organism>
    <name type="scientific">Caenorhabditis elegans</name>
    <dbReference type="NCBI Taxonomy" id="6239"/>
    <lineage>
        <taxon>Eukaryota</taxon>
        <taxon>Metazoa</taxon>
        <taxon>Ecdysozoa</taxon>
        <taxon>Nematoda</taxon>
        <taxon>Chromadorea</taxon>
        <taxon>Rhabditida</taxon>
        <taxon>Rhabditina</taxon>
        <taxon>Rhabditomorpha</taxon>
        <taxon>Rhabditoidea</taxon>
        <taxon>Rhabditidae</taxon>
        <taxon>Peloderinae</taxon>
        <taxon>Caenorhabditis</taxon>
    </lineage>
</organism>
<dbReference type="EMBL" id="FO080429">
    <property type="protein sequence ID" value="CCD63642.1"/>
    <property type="molecule type" value="Genomic_DNA"/>
</dbReference>
<dbReference type="EMBL" id="FO080429">
    <property type="protein sequence ID" value="CCD63643.1"/>
    <property type="molecule type" value="Genomic_DNA"/>
</dbReference>
<dbReference type="PIR" id="S44614">
    <property type="entry name" value="S44614"/>
</dbReference>
<dbReference type="RefSeq" id="NP_001040845.2">
    <molecule id="P34325-1"/>
    <property type="nucleotide sequence ID" value="NM_001047380.5"/>
</dbReference>
<dbReference type="RefSeq" id="NP_001040846.1">
    <molecule id="P34325-2"/>
    <property type="nucleotide sequence ID" value="NM_001047381.3"/>
</dbReference>
<dbReference type="BioGRID" id="41300">
    <property type="interactions" value="3"/>
</dbReference>
<dbReference type="FunCoup" id="P34325">
    <property type="interactions" value="87"/>
</dbReference>
<dbReference type="STRING" id="6239.C08C3.4a.1"/>
<dbReference type="iPTMnet" id="P34325"/>
<dbReference type="PaxDb" id="6239-C08C3.4a"/>
<dbReference type="PeptideAtlas" id="P34325"/>
<dbReference type="EnsemblMetazoa" id="C08C3.4a.1">
    <molecule id="P34325-1"/>
    <property type="protein sequence ID" value="C08C3.4a.1"/>
    <property type="gene ID" value="WBGene00015591"/>
</dbReference>
<dbReference type="EnsemblMetazoa" id="C08C3.4b.1">
    <molecule id="P34325-2"/>
    <property type="protein sequence ID" value="C08C3.4b.1"/>
    <property type="gene ID" value="WBGene00015591"/>
</dbReference>
<dbReference type="GeneID" id="176092"/>
<dbReference type="KEGG" id="cel:CELE_C08C3.4"/>
<dbReference type="UCSC" id="C08C3.4a">
    <molecule id="P34325-1"/>
    <property type="organism name" value="c. elegans"/>
</dbReference>
<dbReference type="AGR" id="WB:WBGene00015591"/>
<dbReference type="CTD" id="176092"/>
<dbReference type="WormBase" id="C08C3.4a">
    <molecule id="P34325-1"/>
    <property type="protein sequence ID" value="CE41610"/>
    <property type="gene ID" value="WBGene00015591"/>
    <property type="gene designation" value="cyk-7"/>
</dbReference>
<dbReference type="WormBase" id="C08C3.4b">
    <molecule id="P34325-2"/>
    <property type="protein sequence ID" value="CE39671"/>
    <property type="gene ID" value="WBGene00015591"/>
    <property type="gene designation" value="cyk-7"/>
</dbReference>
<dbReference type="eggNOG" id="ENOG502SCRH">
    <property type="taxonomic scope" value="Eukaryota"/>
</dbReference>
<dbReference type="HOGENOM" id="CLU_080527_0_0_1"/>
<dbReference type="InParanoid" id="P34325"/>
<dbReference type="OMA" id="ARCEQFV"/>
<dbReference type="OrthoDB" id="5813706at2759"/>
<dbReference type="PRO" id="PR:P34325"/>
<dbReference type="Proteomes" id="UP000001940">
    <property type="component" value="Chromosome III"/>
</dbReference>
<dbReference type="Bgee" id="WBGene00015591">
    <property type="expression patterns" value="Expressed in adult organism and 4 other cell types or tissues"/>
</dbReference>
<dbReference type="GO" id="GO:0090543">
    <property type="term" value="C:Flemming body"/>
    <property type="evidence" value="ECO:0000314"/>
    <property type="project" value="WormBase"/>
</dbReference>
<dbReference type="GO" id="GO:0043063">
    <property type="term" value="P:intercellular bridge organization"/>
    <property type="evidence" value="ECO:0000315"/>
    <property type="project" value="WormBase"/>
</dbReference>
<dbReference type="Gene3D" id="3.30.710.10">
    <property type="entry name" value="Potassium Channel Kv1.1, Chain A"/>
    <property type="match status" value="1"/>
</dbReference>
<dbReference type="InterPro" id="IPR000210">
    <property type="entry name" value="BTB/POZ_dom"/>
</dbReference>
<dbReference type="InterPro" id="IPR011333">
    <property type="entry name" value="SKP1/BTB/POZ_sf"/>
</dbReference>
<dbReference type="Pfam" id="PF00651">
    <property type="entry name" value="BTB"/>
    <property type="match status" value="1"/>
</dbReference>
<dbReference type="SMART" id="SM00225">
    <property type="entry name" value="BTB"/>
    <property type="match status" value="1"/>
</dbReference>
<dbReference type="SUPFAM" id="SSF54695">
    <property type="entry name" value="POZ domain"/>
    <property type="match status" value="1"/>
</dbReference>
<evidence type="ECO:0000256" key="1">
    <source>
        <dbReference type="SAM" id="MobiDB-lite"/>
    </source>
</evidence>
<evidence type="ECO:0000305" key="2"/>
<evidence type="ECO:0000312" key="3">
    <source>
        <dbReference type="WormBase" id="C08C3.4a"/>
    </source>
</evidence>
<keyword id="KW-0025">Alternative splicing</keyword>
<keyword id="KW-1185">Reference proteome</keyword>
<feature type="chain" id="PRO_0000065168" description="Cytokinesis defective protein 7" evidence="2">
    <location>
        <begin position="1"/>
        <end position="267"/>
    </location>
</feature>
<feature type="region of interest" description="Disordered" evidence="1">
    <location>
        <begin position="244"/>
        <end position="267"/>
    </location>
</feature>
<feature type="compositionally biased region" description="Basic and acidic residues" evidence="1">
    <location>
        <begin position="258"/>
        <end position="267"/>
    </location>
</feature>
<feature type="splice variant" id="VSP_032727" description="In isoform b." evidence="2">
    <location>
        <begin position="1"/>
        <end position="14"/>
    </location>
</feature>
<feature type="splice variant" id="VSP_032728" description="In isoform b." evidence="2">
    <location>
        <begin position="151"/>
        <end position="155"/>
    </location>
</feature>
<name>CYK7_CAEEL</name>
<accession>P34325</accession>
<accession>A8WFF0</accession>
<accession>A8WFF1</accession>
<protein>
    <recommendedName>
        <fullName evidence="3">Cytokinesis defective protein 7</fullName>
    </recommendedName>
</protein>
<gene>
    <name evidence="3" type="primary">cyk-7</name>
    <name evidence="3" type="ORF">C08C3.4</name>
</gene>
<proteinExistence type="predicted"/>
<reference key="1">
    <citation type="journal article" date="1994" name="Nature">
        <title>2.2 Mb of contiguous nucleotide sequence from chromosome III of C. elegans.</title>
        <authorList>
            <person name="Wilson R."/>
            <person name="Ainscough R."/>
            <person name="Anderson K."/>
            <person name="Baynes C."/>
            <person name="Berks M."/>
            <person name="Bonfield J."/>
            <person name="Burton J."/>
            <person name="Connell M."/>
            <person name="Copsey T."/>
            <person name="Cooper J."/>
            <person name="Coulson A."/>
            <person name="Craxton M."/>
            <person name="Dear S."/>
            <person name="Du Z."/>
            <person name="Durbin R."/>
            <person name="Favello A."/>
            <person name="Fraser A."/>
            <person name="Fulton L."/>
            <person name="Gardner A."/>
            <person name="Green P."/>
            <person name="Hawkins T."/>
            <person name="Hillier L."/>
            <person name="Jier M."/>
            <person name="Johnston L."/>
            <person name="Jones M."/>
            <person name="Kershaw J."/>
            <person name="Kirsten J."/>
            <person name="Laisster N."/>
            <person name="Latreille P."/>
            <person name="Lightning J."/>
            <person name="Lloyd C."/>
            <person name="Mortimore B."/>
            <person name="O'Callaghan M."/>
            <person name="Parsons J."/>
            <person name="Percy C."/>
            <person name="Rifken L."/>
            <person name="Roopra A."/>
            <person name="Saunders D."/>
            <person name="Shownkeen R."/>
            <person name="Sims M."/>
            <person name="Smaldon N."/>
            <person name="Smith A."/>
            <person name="Smith M."/>
            <person name="Sonnhammer E."/>
            <person name="Staden R."/>
            <person name="Sulston J."/>
            <person name="Thierry-Mieg J."/>
            <person name="Thomas K."/>
            <person name="Vaudin M."/>
            <person name="Vaughan K."/>
            <person name="Waterston R."/>
            <person name="Watson A."/>
            <person name="Weinstock L."/>
            <person name="Wilkinson-Sproat J."/>
            <person name="Wohldman P."/>
        </authorList>
    </citation>
    <scope>NUCLEOTIDE SEQUENCE [LARGE SCALE GENOMIC DNA]</scope>
    <source>
        <strain>Bristol N2</strain>
    </source>
</reference>
<reference key="2">
    <citation type="journal article" date="1998" name="Science">
        <title>Genome sequence of the nematode C. elegans: a platform for investigating biology.</title>
        <authorList>
            <consortium name="The C. elegans sequencing consortium"/>
        </authorList>
    </citation>
    <scope>NUCLEOTIDE SEQUENCE [LARGE SCALE GENOMIC DNA]</scope>
    <scope>ALTERNATIVE SPLICING</scope>
    <source>
        <strain>Bristol N2</strain>
    </source>
</reference>
<comment type="alternative products">
    <event type="alternative splicing"/>
    <isoform>
        <id>P34325-1</id>
        <name>a</name>
        <sequence type="displayed"/>
    </isoform>
    <isoform>
        <id>P34325-2</id>
        <name>b</name>
        <sequence type="described" ref="VSP_032727 VSP_032728"/>
    </isoform>
</comment>